<feature type="chain" id="PRO_1000215049" description="Large ribosomal subunit protein uL23">
    <location>
        <begin position="1"/>
        <end position="101"/>
    </location>
</feature>
<organism>
    <name type="scientific">Tolumonas auensis (strain DSM 9187 / NBRC 110442 / TA 4)</name>
    <dbReference type="NCBI Taxonomy" id="595494"/>
    <lineage>
        <taxon>Bacteria</taxon>
        <taxon>Pseudomonadati</taxon>
        <taxon>Pseudomonadota</taxon>
        <taxon>Gammaproteobacteria</taxon>
        <taxon>Aeromonadales</taxon>
        <taxon>Aeromonadaceae</taxon>
        <taxon>Tolumonas</taxon>
    </lineage>
</organism>
<evidence type="ECO:0000255" key="1">
    <source>
        <dbReference type="HAMAP-Rule" id="MF_01369"/>
    </source>
</evidence>
<evidence type="ECO:0000305" key="2"/>
<protein>
    <recommendedName>
        <fullName evidence="1">Large ribosomal subunit protein uL23</fullName>
    </recommendedName>
    <alternativeName>
        <fullName evidence="2">50S ribosomal protein L23</fullName>
    </alternativeName>
</protein>
<proteinExistence type="inferred from homology"/>
<dbReference type="EMBL" id="CP001616">
    <property type="protein sequence ID" value="ACQ91731.1"/>
    <property type="molecule type" value="Genomic_DNA"/>
</dbReference>
<dbReference type="RefSeq" id="WP_012728330.1">
    <property type="nucleotide sequence ID" value="NC_012691.1"/>
</dbReference>
<dbReference type="SMR" id="C4L7T2"/>
<dbReference type="STRING" id="595494.Tola_0101"/>
<dbReference type="KEGG" id="tau:Tola_0101"/>
<dbReference type="eggNOG" id="COG0089">
    <property type="taxonomic scope" value="Bacteria"/>
</dbReference>
<dbReference type="HOGENOM" id="CLU_037562_3_1_6"/>
<dbReference type="OrthoDB" id="9793353at2"/>
<dbReference type="Proteomes" id="UP000009073">
    <property type="component" value="Chromosome"/>
</dbReference>
<dbReference type="GO" id="GO:1990904">
    <property type="term" value="C:ribonucleoprotein complex"/>
    <property type="evidence" value="ECO:0007669"/>
    <property type="project" value="UniProtKB-KW"/>
</dbReference>
<dbReference type="GO" id="GO:0005840">
    <property type="term" value="C:ribosome"/>
    <property type="evidence" value="ECO:0007669"/>
    <property type="project" value="UniProtKB-KW"/>
</dbReference>
<dbReference type="GO" id="GO:0019843">
    <property type="term" value="F:rRNA binding"/>
    <property type="evidence" value="ECO:0007669"/>
    <property type="project" value="UniProtKB-UniRule"/>
</dbReference>
<dbReference type="GO" id="GO:0003735">
    <property type="term" value="F:structural constituent of ribosome"/>
    <property type="evidence" value="ECO:0007669"/>
    <property type="project" value="InterPro"/>
</dbReference>
<dbReference type="GO" id="GO:0006412">
    <property type="term" value="P:translation"/>
    <property type="evidence" value="ECO:0007669"/>
    <property type="project" value="UniProtKB-UniRule"/>
</dbReference>
<dbReference type="FunFam" id="3.30.70.330:FF:000001">
    <property type="entry name" value="50S ribosomal protein L23"/>
    <property type="match status" value="1"/>
</dbReference>
<dbReference type="Gene3D" id="3.30.70.330">
    <property type="match status" value="1"/>
</dbReference>
<dbReference type="HAMAP" id="MF_01369_B">
    <property type="entry name" value="Ribosomal_uL23_B"/>
    <property type="match status" value="1"/>
</dbReference>
<dbReference type="InterPro" id="IPR012677">
    <property type="entry name" value="Nucleotide-bd_a/b_plait_sf"/>
</dbReference>
<dbReference type="InterPro" id="IPR013025">
    <property type="entry name" value="Ribosomal_uL23-like"/>
</dbReference>
<dbReference type="InterPro" id="IPR012678">
    <property type="entry name" value="Ribosomal_uL23/eL15/eS24_sf"/>
</dbReference>
<dbReference type="NCBIfam" id="NF004358">
    <property type="entry name" value="PRK05738.1-1"/>
    <property type="match status" value="1"/>
</dbReference>
<dbReference type="NCBIfam" id="NF004359">
    <property type="entry name" value="PRK05738.1-3"/>
    <property type="match status" value="1"/>
</dbReference>
<dbReference type="NCBIfam" id="NF004363">
    <property type="entry name" value="PRK05738.2-4"/>
    <property type="match status" value="1"/>
</dbReference>
<dbReference type="NCBIfam" id="NF004366">
    <property type="entry name" value="PRK05738.3-2"/>
    <property type="match status" value="1"/>
</dbReference>
<dbReference type="PANTHER" id="PTHR11620">
    <property type="entry name" value="60S RIBOSOMAL PROTEIN L23A"/>
    <property type="match status" value="1"/>
</dbReference>
<dbReference type="Pfam" id="PF00276">
    <property type="entry name" value="Ribosomal_L23"/>
    <property type="match status" value="1"/>
</dbReference>
<dbReference type="SUPFAM" id="SSF54189">
    <property type="entry name" value="Ribosomal proteins S24e, L23 and L15e"/>
    <property type="match status" value="1"/>
</dbReference>
<name>RL23_TOLAT</name>
<gene>
    <name evidence="1" type="primary">rplW</name>
    <name type="ordered locus">Tola_0101</name>
</gene>
<keyword id="KW-1185">Reference proteome</keyword>
<keyword id="KW-0687">Ribonucleoprotein</keyword>
<keyword id="KW-0689">Ribosomal protein</keyword>
<keyword id="KW-0694">RNA-binding</keyword>
<keyword id="KW-0699">rRNA-binding</keyword>
<comment type="function">
    <text evidence="1">One of the early assembly proteins it binds 23S rRNA. One of the proteins that surrounds the polypeptide exit tunnel on the outside of the ribosome. Forms the main docking site for trigger factor binding to the ribosome.</text>
</comment>
<comment type="subunit">
    <text evidence="1">Part of the 50S ribosomal subunit. Contacts protein L29, and trigger factor when it is bound to the ribosome.</text>
</comment>
<comment type="similarity">
    <text evidence="1">Belongs to the universal ribosomal protein uL23 family.</text>
</comment>
<reference key="1">
    <citation type="submission" date="2009-05" db="EMBL/GenBank/DDBJ databases">
        <title>Complete sequence of Tolumonas auensis DSM 9187.</title>
        <authorList>
            <consortium name="US DOE Joint Genome Institute"/>
            <person name="Lucas S."/>
            <person name="Copeland A."/>
            <person name="Lapidus A."/>
            <person name="Glavina del Rio T."/>
            <person name="Tice H."/>
            <person name="Bruce D."/>
            <person name="Goodwin L."/>
            <person name="Pitluck S."/>
            <person name="Chertkov O."/>
            <person name="Brettin T."/>
            <person name="Detter J.C."/>
            <person name="Han C."/>
            <person name="Larimer F."/>
            <person name="Land M."/>
            <person name="Hauser L."/>
            <person name="Kyrpides N."/>
            <person name="Mikhailova N."/>
            <person name="Spring S."/>
            <person name="Beller H."/>
        </authorList>
    </citation>
    <scope>NUCLEOTIDE SEQUENCE [LARGE SCALE GENOMIC DNA]</scope>
    <source>
        <strain>DSM 9187 / NBRC 110442 / TA 4</strain>
    </source>
</reference>
<accession>C4L7T2</accession>
<sequence>MIREERLLKVLKAPHISEKSTMVAEKLNTIVFKVATDATKAEIKAAVEKLFEVKVEAVRTLNVVGKTKRTGSRMGRRSDWKKAYVTLVEGQDIDFVGGAAE</sequence>